<gene>
    <name type="primary">sf3b3</name>
    <name type="ORF">DDB_G0282569</name>
</gene>
<feature type="chain" id="PRO_0000327995" description="Probable splicing factor 3B subunit 3">
    <location>
        <begin position="1"/>
        <end position="1256"/>
    </location>
</feature>
<feature type="region of interest" description="Disordered" evidence="2">
    <location>
        <begin position="671"/>
        <end position="696"/>
    </location>
</feature>
<feature type="compositionally biased region" description="Low complexity" evidence="2">
    <location>
        <begin position="674"/>
        <end position="696"/>
    </location>
</feature>
<keyword id="KW-0507">mRNA processing</keyword>
<keyword id="KW-0508">mRNA splicing</keyword>
<keyword id="KW-0539">Nucleus</keyword>
<keyword id="KW-1185">Reference proteome</keyword>
<keyword id="KW-0747">Spliceosome</keyword>
<dbReference type="EMBL" id="AAFI02000047">
    <property type="protein sequence ID" value="EAL66144.1"/>
    <property type="molecule type" value="Genomic_DNA"/>
</dbReference>
<dbReference type="RefSeq" id="XP_640132.1">
    <property type="nucleotide sequence ID" value="XM_635040.1"/>
</dbReference>
<dbReference type="SMR" id="Q54SA7"/>
<dbReference type="FunCoup" id="Q54SA7">
    <property type="interactions" value="1375"/>
</dbReference>
<dbReference type="STRING" id="44689.Q54SA7"/>
<dbReference type="PaxDb" id="44689-DDB0233171"/>
<dbReference type="EnsemblProtists" id="EAL66144">
    <property type="protein sequence ID" value="EAL66144"/>
    <property type="gene ID" value="DDB_G0282569"/>
</dbReference>
<dbReference type="GeneID" id="8623669"/>
<dbReference type="KEGG" id="ddi:DDB_G0282569"/>
<dbReference type="dictyBase" id="DDB_G0282569">
    <property type="gene designation" value="sf3b3"/>
</dbReference>
<dbReference type="VEuPathDB" id="AmoebaDB:DDB_G0282569"/>
<dbReference type="eggNOG" id="KOG1898">
    <property type="taxonomic scope" value="Eukaryota"/>
</dbReference>
<dbReference type="HOGENOM" id="CLU_003246_0_0_1"/>
<dbReference type="InParanoid" id="Q54SA7"/>
<dbReference type="OMA" id="PRATGHW"/>
<dbReference type="PhylomeDB" id="Q54SA7"/>
<dbReference type="PRO" id="PR:Q54SA7"/>
<dbReference type="Proteomes" id="UP000002195">
    <property type="component" value="Chromosome 3"/>
</dbReference>
<dbReference type="GO" id="GO:0005634">
    <property type="term" value="C:nucleus"/>
    <property type="evidence" value="ECO:0000250"/>
    <property type="project" value="UniProtKB"/>
</dbReference>
<dbReference type="GO" id="GO:0005681">
    <property type="term" value="C:spliceosomal complex"/>
    <property type="evidence" value="ECO:0000250"/>
    <property type="project" value="dictyBase"/>
</dbReference>
<dbReference type="GO" id="GO:0005686">
    <property type="term" value="C:U2 snRNP"/>
    <property type="evidence" value="ECO:0000318"/>
    <property type="project" value="GO_Central"/>
</dbReference>
<dbReference type="GO" id="GO:0071005">
    <property type="term" value="C:U2-type precatalytic spliceosome"/>
    <property type="evidence" value="ECO:0000250"/>
    <property type="project" value="UniProtKB"/>
</dbReference>
<dbReference type="GO" id="GO:0030620">
    <property type="term" value="F:U2 snRNA binding"/>
    <property type="evidence" value="ECO:0000318"/>
    <property type="project" value="GO_Central"/>
</dbReference>
<dbReference type="GO" id="GO:0000398">
    <property type="term" value="P:mRNA splicing, via spliceosome"/>
    <property type="evidence" value="ECO:0000250"/>
    <property type="project" value="UniProtKB"/>
</dbReference>
<dbReference type="FunFam" id="1.10.150.910:FF:000002">
    <property type="entry name" value="Splicing factor 3B subunit 3"/>
    <property type="match status" value="1"/>
</dbReference>
<dbReference type="FunFam" id="2.130.10.10:FF:000640">
    <property type="entry name" value="Splicing factor 3B subunit 3"/>
    <property type="match status" value="1"/>
</dbReference>
<dbReference type="FunFam" id="2.130.10.10:FF:000031">
    <property type="entry name" value="Splicing factor 3b subunit 3"/>
    <property type="match status" value="1"/>
</dbReference>
<dbReference type="Gene3D" id="1.10.150.910">
    <property type="match status" value="1"/>
</dbReference>
<dbReference type="Gene3D" id="2.130.10.10">
    <property type="entry name" value="YVTN repeat-like/Quinoprotein amine dehydrogenase"/>
    <property type="match status" value="3"/>
</dbReference>
<dbReference type="InterPro" id="IPR018846">
    <property type="entry name" value="Beta-prop_RSE1/DDB1/CPSF1_1st"/>
</dbReference>
<dbReference type="InterPro" id="IPR004871">
    <property type="entry name" value="Cleavage/polyA-sp_fac_asu_C"/>
</dbReference>
<dbReference type="InterPro" id="IPR050358">
    <property type="entry name" value="RSE1/DDB1/CFT1/CPSF1"/>
</dbReference>
<dbReference type="InterPro" id="IPR015943">
    <property type="entry name" value="WD40/YVTN_repeat-like_dom_sf"/>
</dbReference>
<dbReference type="InterPro" id="IPR036322">
    <property type="entry name" value="WD40_repeat_dom_sf"/>
</dbReference>
<dbReference type="PANTHER" id="PTHR10644">
    <property type="entry name" value="DNA REPAIR/RNA PROCESSING CPSF FAMILY"/>
    <property type="match status" value="1"/>
</dbReference>
<dbReference type="Pfam" id="PF10433">
    <property type="entry name" value="Beta-prop_RSE1_1st"/>
    <property type="match status" value="1"/>
</dbReference>
<dbReference type="Pfam" id="PF23726">
    <property type="entry name" value="Beta-prop_RSE1_2nd"/>
    <property type="match status" value="1"/>
</dbReference>
<dbReference type="Pfam" id="PF03178">
    <property type="entry name" value="CPSF_A"/>
    <property type="match status" value="1"/>
</dbReference>
<dbReference type="SUPFAM" id="SSF101898">
    <property type="entry name" value="NHL repeat"/>
    <property type="match status" value="1"/>
</dbReference>
<dbReference type="SUPFAM" id="SSF50978">
    <property type="entry name" value="WD40 repeat-like"/>
    <property type="match status" value="1"/>
</dbReference>
<organism>
    <name type="scientific">Dictyostelium discoideum</name>
    <name type="common">Social amoeba</name>
    <dbReference type="NCBI Taxonomy" id="44689"/>
    <lineage>
        <taxon>Eukaryota</taxon>
        <taxon>Amoebozoa</taxon>
        <taxon>Evosea</taxon>
        <taxon>Eumycetozoa</taxon>
        <taxon>Dictyostelia</taxon>
        <taxon>Dictyosteliales</taxon>
        <taxon>Dictyosteliaceae</taxon>
        <taxon>Dictyostelium</taxon>
    </lineage>
</organism>
<comment type="function">
    <text evidence="1">Involved in pre-mRNA splicing as a component of the splicing factor SF3B complex, a constituent of the spliceosome. SF3B complex is required for 'A' complex assembly formed by the stable binding of U2 snRNP to the branchpoint sequence (BPS) in pre-mRNA. Sequence independent binding of SF3A/SF3B complex upstream of the branch site is essential, it may anchor U2 snRNP to the pre-mRNA. May also be involved in the assembly of the 'E' complex. Also belongs to the minor U12-dependent spliceosome, which is involved in the splicing of rare class of nuclear pre-mRNA intron.</text>
</comment>
<comment type="subunit">
    <text evidence="1">Identified in the spliceosome A complex; remains associated with the spliceosome throughout the splicing process. Component of the spliceosome B complex. Identified in the spliceosome C complex. Identified in the spliceosome E complex. Component of the U11/U12 snRNPs that are part of the U12-type spliceosome. Component of splicing factor SF3B complex which is composed of at least eight subunits. SF3B associates with the splicing factor SF3A and a 12S RNA unit to form the U2 small nuclear ribonucleoproteins complex (U2 snRNP).</text>
</comment>
<comment type="subcellular location">
    <subcellularLocation>
        <location evidence="1">Nucleus</location>
    </subcellularLocation>
</comment>
<comment type="similarity">
    <text evidence="3">Belongs to the RSE1 family.</text>
</comment>
<reference key="1">
    <citation type="journal article" date="2005" name="Nature">
        <title>The genome of the social amoeba Dictyostelium discoideum.</title>
        <authorList>
            <person name="Eichinger L."/>
            <person name="Pachebat J.A."/>
            <person name="Gloeckner G."/>
            <person name="Rajandream M.A."/>
            <person name="Sucgang R."/>
            <person name="Berriman M."/>
            <person name="Song J."/>
            <person name="Olsen R."/>
            <person name="Szafranski K."/>
            <person name="Xu Q."/>
            <person name="Tunggal B."/>
            <person name="Kummerfeld S."/>
            <person name="Madera M."/>
            <person name="Konfortov B.A."/>
            <person name="Rivero F."/>
            <person name="Bankier A.T."/>
            <person name="Lehmann R."/>
            <person name="Hamlin N."/>
            <person name="Davies R."/>
            <person name="Gaudet P."/>
            <person name="Fey P."/>
            <person name="Pilcher K."/>
            <person name="Chen G."/>
            <person name="Saunders D."/>
            <person name="Sodergren E.J."/>
            <person name="Davis P."/>
            <person name="Kerhornou A."/>
            <person name="Nie X."/>
            <person name="Hall N."/>
            <person name="Anjard C."/>
            <person name="Hemphill L."/>
            <person name="Bason N."/>
            <person name="Farbrother P."/>
            <person name="Desany B."/>
            <person name="Just E."/>
            <person name="Morio T."/>
            <person name="Rost R."/>
            <person name="Churcher C.M."/>
            <person name="Cooper J."/>
            <person name="Haydock S."/>
            <person name="van Driessche N."/>
            <person name="Cronin A."/>
            <person name="Goodhead I."/>
            <person name="Muzny D.M."/>
            <person name="Mourier T."/>
            <person name="Pain A."/>
            <person name="Lu M."/>
            <person name="Harper D."/>
            <person name="Lindsay R."/>
            <person name="Hauser H."/>
            <person name="James K.D."/>
            <person name="Quiles M."/>
            <person name="Madan Babu M."/>
            <person name="Saito T."/>
            <person name="Buchrieser C."/>
            <person name="Wardroper A."/>
            <person name="Felder M."/>
            <person name="Thangavelu M."/>
            <person name="Johnson D."/>
            <person name="Knights A."/>
            <person name="Loulseged H."/>
            <person name="Mungall K.L."/>
            <person name="Oliver K."/>
            <person name="Price C."/>
            <person name="Quail M.A."/>
            <person name="Urushihara H."/>
            <person name="Hernandez J."/>
            <person name="Rabbinowitsch E."/>
            <person name="Steffen D."/>
            <person name="Sanders M."/>
            <person name="Ma J."/>
            <person name="Kohara Y."/>
            <person name="Sharp S."/>
            <person name="Simmonds M.N."/>
            <person name="Spiegler S."/>
            <person name="Tivey A."/>
            <person name="Sugano S."/>
            <person name="White B."/>
            <person name="Walker D."/>
            <person name="Woodward J.R."/>
            <person name="Winckler T."/>
            <person name="Tanaka Y."/>
            <person name="Shaulsky G."/>
            <person name="Schleicher M."/>
            <person name="Weinstock G.M."/>
            <person name="Rosenthal A."/>
            <person name="Cox E.C."/>
            <person name="Chisholm R.L."/>
            <person name="Gibbs R.A."/>
            <person name="Loomis W.F."/>
            <person name="Platzer M."/>
            <person name="Kay R.R."/>
            <person name="Williams J.G."/>
            <person name="Dear P.H."/>
            <person name="Noegel A.A."/>
            <person name="Barrell B.G."/>
            <person name="Kuspa A."/>
        </authorList>
    </citation>
    <scope>NUCLEOTIDE SEQUENCE [LARGE SCALE GENOMIC DNA]</scope>
    <source>
        <strain>AX4</strain>
    </source>
</reference>
<sequence>MYLYNLTLQRPTSVYQSISGNFSGTKQVEIVLNHGRSLELIRYDENGKMQSVLYTEVFGIVRSIIPFRLTSGTKDYIIVGSDSGRVVILEYNSQKNQFDKIHQETFGRSGCRRIVPGQYLAVDPKGRAFMIGAIEKQKLVYILNRDSSANLTISSPLEAHKSNTIVFSMCGVDVGFDNPIFATISVDYTEEDSSSGGGGGGSIEEMMDEDIGKKKKLLTYYELDLGLNNVVRKWSDQVDDSANIVMTVPGGTEGPGGVLVASEDYIVYRNQDHAEVRSRIPRRYGSDPNKGVLIISHSSHKQKGMFFFLVQSEHGDLYKITLDYQGDQVSEVNVNYFDTIVLANCLTVLKNGFLFAASEFGDHTLYFFKSIGDEEEEGQAKRLEDKDGHLWFTPRNSCGTKMEELKNLEPTSHLSSLSPIIDFKVLDLVREENPQLYSLCGTGLNSSLKVLRHGLSVTTITTANLPGVPSGIWTVPKSTSPNAIDQTDKYIVVSFVGTTSVLSVGDTIQENHESGILETTTTLLVKSMGDDAIIQVFPTGFRHIKSDLRINEWRAPGRKTIVRASANQSQLAIALSGGEIIYFELDQASNLIEIIKKDLRRDIACIEISPIPKGRNMARFIAVSDWEGPIRVLSLDRDNCLGQVSMLDTDKVYIESLSIIEMQLNEMGIETKKSQSQTGQTTTTTTSTSSASSSVTSGGSLFLFVGLKNGVVKRATLDSVTGELSDIRTRLLGRKPVKLFKVKVRGSNAMLALSSRVWLNYINQGKLDIVPLSIEPLENASNLSSEQSAESIVATSENKIIIFSIDKLGDLFNQETIKLNATPKRFIIHPQTSYIIILETETNYNTDNIDIDKINEQSEKLLLEKQKELQQEMDIDDDDQNNNNEIEPFKKLFKPKAGKGKWKSYIKIMDPITHESLESLMLEDGEAGFSVCTCSFGESGEIFLVVGCVTDMVLNPKSHKSAHLNLYRFIDGGKKLELLYKTEVEEPVYAMAQFQGKLVCGVGKSIRIYDMGKKKLLRKCETKNLPNTIVNIHSLGDRLVVGDIQESIHFIKYKRSENMLYVFADDLAPRWMTSSVMLDYDTVAGADKFGNIFVLRLPLLISDEVEEDPTGTKLKFESGTLNGAPHKLDHIANFFVGDTVTTLNKTSLVVGGPEVILYTTISGAIGALIPFTSREDVDFFSTLEMNMRSDCLPLCGRDHLAYRSYYFPVKNIIDGDLCEQFSTLNYQKQLSISEELSRSPSEVIKKLEEIRSQKLL</sequence>
<proteinExistence type="inferred from homology"/>
<accession>Q54SA7</accession>
<name>SF3B3_DICDI</name>
<protein>
    <recommendedName>
        <fullName>Probable splicing factor 3B subunit 3</fullName>
    </recommendedName>
</protein>
<evidence type="ECO:0000250" key="1">
    <source>
        <dbReference type="UniProtKB" id="Q15393"/>
    </source>
</evidence>
<evidence type="ECO:0000256" key="2">
    <source>
        <dbReference type="SAM" id="MobiDB-lite"/>
    </source>
</evidence>
<evidence type="ECO:0000305" key="3"/>